<evidence type="ECO:0000255" key="1">
    <source>
        <dbReference type="HAMAP-Rule" id="MF_01585"/>
    </source>
</evidence>
<proteinExistence type="inferred from homology"/>
<keyword id="KW-0997">Cell inner membrane</keyword>
<keyword id="KW-1003">Cell membrane</keyword>
<keyword id="KW-0445">Lipid transport</keyword>
<keyword id="KW-0472">Membrane</keyword>
<keyword id="KW-1185">Reference proteome</keyword>
<keyword id="KW-0812">Transmembrane</keyword>
<keyword id="KW-1133">Transmembrane helix</keyword>
<keyword id="KW-0813">Transport</keyword>
<comment type="function">
    <text evidence="1">Catalyzes the facilitated diffusion of 2-acyl-glycero-3-phosphoethanolamine (2-acyl-GPE) into the cell.</text>
</comment>
<comment type="subcellular location">
    <subcellularLocation>
        <location evidence="1">Cell inner membrane</location>
        <topology evidence="1">Multi-pass membrane protein</topology>
    </subcellularLocation>
</comment>
<comment type="similarity">
    <text evidence="1">Belongs to the major facilitator superfamily. LplT (TC 2.A.1.42) family.</text>
</comment>
<dbReference type="EMBL" id="CP001063">
    <property type="protein sequence ID" value="ACD08837.1"/>
    <property type="molecule type" value="Genomic_DNA"/>
</dbReference>
<dbReference type="RefSeq" id="WP_000004618.1">
    <property type="nucleotide sequence ID" value="NC_010658.1"/>
</dbReference>
<dbReference type="SMR" id="B2TYQ6"/>
<dbReference type="STRING" id="344609.SbBS512_E3027"/>
<dbReference type="GeneID" id="93779161"/>
<dbReference type="KEGG" id="sbc:SbBS512_E3027"/>
<dbReference type="HOGENOM" id="CLU_047399_0_0_6"/>
<dbReference type="Proteomes" id="UP000001030">
    <property type="component" value="Chromosome"/>
</dbReference>
<dbReference type="GO" id="GO:0005886">
    <property type="term" value="C:plasma membrane"/>
    <property type="evidence" value="ECO:0007669"/>
    <property type="project" value="UniProtKB-SubCell"/>
</dbReference>
<dbReference type="GO" id="GO:0051978">
    <property type="term" value="F:lysophospholipid:sodium symporter activity"/>
    <property type="evidence" value="ECO:0007669"/>
    <property type="project" value="InterPro"/>
</dbReference>
<dbReference type="CDD" id="cd06173">
    <property type="entry name" value="MFS_MefA_like"/>
    <property type="match status" value="1"/>
</dbReference>
<dbReference type="FunFam" id="1.20.1250.20:FF:000091">
    <property type="entry name" value="Lysophospholipid transporter LplT"/>
    <property type="match status" value="1"/>
</dbReference>
<dbReference type="Gene3D" id="1.20.1250.20">
    <property type="entry name" value="MFS general substrate transporter like domains"/>
    <property type="match status" value="1"/>
</dbReference>
<dbReference type="HAMAP" id="MF_01585">
    <property type="entry name" value="MFS_LplT"/>
    <property type="match status" value="1"/>
</dbReference>
<dbReference type="InterPro" id="IPR023727">
    <property type="entry name" value="LysoPLipid__transptr_LplT"/>
</dbReference>
<dbReference type="InterPro" id="IPR011701">
    <property type="entry name" value="MFS"/>
</dbReference>
<dbReference type="InterPro" id="IPR036259">
    <property type="entry name" value="MFS_trans_sf"/>
</dbReference>
<dbReference type="NCBIfam" id="NF008397">
    <property type="entry name" value="PRK11195.1"/>
    <property type="match status" value="1"/>
</dbReference>
<dbReference type="PANTHER" id="PTHR43266">
    <property type="entry name" value="MACROLIDE-EFFLUX PROTEIN"/>
    <property type="match status" value="1"/>
</dbReference>
<dbReference type="PANTHER" id="PTHR43266:SF2">
    <property type="entry name" value="MAJOR FACILITATOR SUPERFAMILY (MFS) PROFILE DOMAIN-CONTAINING PROTEIN"/>
    <property type="match status" value="1"/>
</dbReference>
<dbReference type="Pfam" id="PF07690">
    <property type="entry name" value="MFS_1"/>
    <property type="match status" value="1"/>
</dbReference>
<dbReference type="SUPFAM" id="SSF103473">
    <property type="entry name" value="MFS general substrate transporter"/>
    <property type="match status" value="1"/>
</dbReference>
<feature type="chain" id="PRO_1000201281" description="Lysophospholipid transporter LplT">
    <location>
        <begin position="1"/>
        <end position="397"/>
    </location>
</feature>
<feature type="topological domain" description="Periplasmic" evidence="1">
    <location>
        <begin position="1"/>
        <end position="17"/>
    </location>
</feature>
<feature type="transmembrane region" description="Helical" evidence="1">
    <location>
        <begin position="18"/>
        <end position="38"/>
    </location>
</feature>
<feature type="topological domain" description="Cytoplasmic" evidence="1">
    <location>
        <begin position="39"/>
        <end position="52"/>
    </location>
</feature>
<feature type="transmembrane region" description="Helical" evidence="1">
    <location>
        <begin position="53"/>
        <end position="73"/>
    </location>
</feature>
<feature type="topological domain" description="Periplasmic" evidence="1">
    <location>
        <begin position="74"/>
        <end position="90"/>
    </location>
</feature>
<feature type="transmembrane region" description="Helical" evidence="1">
    <location>
        <begin position="91"/>
        <end position="111"/>
    </location>
</feature>
<feature type="topological domain" description="Cytoplasmic" evidence="1">
    <location>
        <begin position="112"/>
        <end position="144"/>
    </location>
</feature>
<feature type="transmembrane region" description="Helical" evidence="1">
    <location>
        <begin position="145"/>
        <end position="165"/>
    </location>
</feature>
<feature type="topological domain" description="Periplasmic" evidence="1">
    <location>
        <position position="166"/>
    </location>
</feature>
<feature type="transmembrane region" description="Helical" evidence="1">
    <location>
        <begin position="167"/>
        <end position="187"/>
    </location>
</feature>
<feature type="topological domain" description="Cytoplasmic" evidence="1">
    <location>
        <begin position="188"/>
        <end position="226"/>
    </location>
</feature>
<feature type="transmembrane region" description="Helical" evidence="1">
    <location>
        <begin position="227"/>
        <end position="247"/>
    </location>
</feature>
<feature type="topological domain" description="Periplasmic" evidence="1">
    <location>
        <begin position="248"/>
        <end position="256"/>
    </location>
</feature>
<feature type="transmembrane region" description="Helical" evidence="1">
    <location>
        <begin position="257"/>
        <end position="277"/>
    </location>
</feature>
<feature type="topological domain" description="Cytoplasmic" evidence="1">
    <location>
        <begin position="278"/>
        <end position="280"/>
    </location>
</feature>
<feature type="transmembrane region" description="Helical" evidence="1">
    <location>
        <begin position="281"/>
        <end position="301"/>
    </location>
</feature>
<feature type="topological domain" description="Periplasmic" evidence="1">
    <location>
        <begin position="302"/>
        <end position="304"/>
    </location>
</feature>
<feature type="transmembrane region" description="Helical" evidence="1">
    <location>
        <begin position="305"/>
        <end position="325"/>
    </location>
</feature>
<feature type="topological domain" description="Cytoplasmic" evidence="1">
    <location>
        <begin position="326"/>
        <end position="343"/>
    </location>
</feature>
<feature type="transmembrane region" description="Helical" evidence="1">
    <location>
        <begin position="344"/>
        <end position="364"/>
    </location>
</feature>
<feature type="topological domain" description="Periplasmic" evidence="1">
    <location>
        <begin position="365"/>
        <end position="366"/>
    </location>
</feature>
<feature type="transmembrane region" description="Helical" evidence="1">
    <location>
        <begin position="367"/>
        <end position="387"/>
    </location>
</feature>
<feature type="topological domain" description="Cytoplasmic" evidence="1">
    <location>
        <begin position="388"/>
        <end position="397"/>
    </location>
</feature>
<protein>
    <recommendedName>
        <fullName evidence="1">Lysophospholipid transporter LplT</fullName>
    </recommendedName>
</protein>
<gene>
    <name evidence="1" type="primary">lplT</name>
    <name type="ordered locus">SbBS512_E3027</name>
</gene>
<organism>
    <name type="scientific">Shigella boydii serotype 18 (strain CDC 3083-94 / BS512)</name>
    <dbReference type="NCBI Taxonomy" id="344609"/>
    <lineage>
        <taxon>Bacteria</taxon>
        <taxon>Pseudomonadati</taxon>
        <taxon>Pseudomonadota</taxon>
        <taxon>Gammaproteobacteria</taxon>
        <taxon>Enterobacterales</taxon>
        <taxon>Enterobacteriaceae</taxon>
        <taxon>Shigella</taxon>
    </lineage>
</organism>
<accession>B2TYQ6</accession>
<reference key="1">
    <citation type="submission" date="2008-05" db="EMBL/GenBank/DDBJ databases">
        <title>Complete sequence of Shigella boydii serotype 18 strain BS512.</title>
        <authorList>
            <person name="Rasko D.A."/>
            <person name="Rosovitz M."/>
            <person name="Maurelli A.T."/>
            <person name="Myers G."/>
            <person name="Seshadri R."/>
            <person name="Cer R."/>
            <person name="Jiang L."/>
            <person name="Ravel J."/>
            <person name="Sebastian Y."/>
        </authorList>
    </citation>
    <scope>NUCLEOTIDE SEQUENCE [LARGE SCALE GENOMIC DNA]</scope>
    <source>
        <strain>CDC 3083-94 / BS512</strain>
    </source>
</reference>
<sequence length="397" mass="41642">MSESVHTNTSLWSKGMKAVIVAQFLSAFGDNALLFATLALLKAQFYPEWSQPILQMVFVGAYILFAPFVGQVADSFAKGRVMMFANGLKLLGAASICFGINPFLGYTLVGVGAAAYSPAKYGILGELTTGSKLVKANGLMEASTIAAILLGSVAGGVLADWHVLVALAACALAYGGAVVANIYIPKLAAARPGQSWNLINMTRSFLNACTSLWRNGETRFSLVGTSLFWGAGVTLRFLLVLWVPVALGITDNATPTYLNAMVAIGIVVGAGAAAKLVTLETVSRCMPAGILIGVVVLIFSLQHELLPAYALLMLIGVMGGFFVVPLNALLQERGKKSVGAGNAIAVQNLGENSAMLLMLGIYSLAVMVGIPVVPIGIGFGALFALAITALWIWQRRH</sequence>
<name>LPLT_SHIB3</name>